<accession>A4SIV9</accession>
<proteinExistence type="inferred from homology"/>
<organism>
    <name type="scientific">Aeromonas salmonicida (strain A449)</name>
    <dbReference type="NCBI Taxonomy" id="382245"/>
    <lineage>
        <taxon>Bacteria</taxon>
        <taxon>Pseudomonadati</taxon>
        <taxon>Pseudomonadota</taxon>
        <taxon>Gammaproteobacteria</taxon>
        <taxon>Aeromonadales</taxon>
        <taxon>Aeromonadaceae</taxon>
        <taxon>Aeromonas</taxon>
    </lineage>
</organism>
<evidence type="ECO:0000255" key="1">
    <source>
        <dbReference type="HAMAP-Rule" id="MF_00605"/>
    </source>
</evidence>
<sequence>MWIGVISLFPEMFRAITEHGVTGRAVKSGLLQIECWNPREFTHDKHRTVDDRPYGGGPGMLMMVQPLRDAIHAAKQAAGDGAKVIYLSPQGRKLTQAGVTELATNQKLILVAGRYEGIDERVIQTEVDEEWSIGDYVLSGGELPAMTLIDAVSRLVPGVLGDQASAEQDSFTDGLLDHPHYTRPELLDGLAVPEALTSGNHEVIRRWRLKQSLGRTWQRRPELINNLALTDEQESLLAEYVREVRDSVK</sequence>
<protein>
    <recommendedName>
        <fullName evidence="1">tRNA (guanine-N(1)-)-methyltransferase</fullName>
        <ecNumber evidence="1">2.1.1.228</ecNumber>
    </recommendedName>
    <alternativeName>
        <fullName evidence="1">M1G-methyltransferase</fullName>
    </alternativeName>
    <alternativeName>
        <fullName evidence="1">tRNA [GM37] methyltransferase</fullName>
    </alternativeName>
</protein>
<dbReference type="EC" id="2.1.1.228" evidence="1"/>
<dbReference type="EMBL" id="CP000644">
    <property type="protein sequence ID" value="ABO88831.1"/>
    <property type="molecule type" value="Genomic_DNA"/>
</dbReference>
<dbReference type="RefSeq" id="WP_005313508.1">
    <property type="nucleotide sequence ID" value="NC_009348.1"/>
</dbReference>
<dbReference type="SMR" id="A4SIV9"/>
<dbReference type="STRING" id="29491.GCA_000820065_01825"/>
<dbReference type="KEGG" id="asa:ASA_0668"/>
<dbReference type="eggNOG" id="COG0336">
    <property type="taxonomic scope" value="Bacteria"/>
</dbReference>
<dbReference type="HOGENOM" id="CLU_047363_0_1_6"/>
<dbReference type="Proteomes" id="UP000000225">
    <property type="component" value="Chromosome"/>
</dbReference>
<dbReference type="GO" id="GO:0005829">
    <property type="term" value="C:cytosol"/>
    <property type="evidence" value="ECO:0007669"/>
    <property type="project" value="TreeGrafter"/>
</dbReference>
<dbReference type="GO" id="GO:0052906">
    <property type="term" value="F:tRNA (guanine(37)-N1)-methyltransferase activity"/>
    <property type="evidence" value="ECO:0007669"/>
    <property type="project" value="UniProtKB-UniRule"/>
</dbReference>
<dbReference type="GO" id="GO:0002939">
    <property type="term" value="P:tRNA N1-guanine methylation"/>
    <property type="evidence" value="ECO:0007669"/>
    <property type="project" value="TreeGrafter"/>
</dbReference>
<dbReference type="CDD" id="cd18080">
    <property type="entry name" value="TrmD-like"/>
    <property type="match status" value="1"/>
</dbReference>
<dbReference type="FunFam" id="1.10.1270.20:FF:000001">
    <property type="entry name" value="tRNA (guanine-N(1)-)-methyltransferase"/>
    <property type="match status" value="1"/>
</dbReference>
<dbReference type="FunFam" id="3.40.1280.10:FF:000001">
    <property type="entry name" value="tRNA (guanine-N(1)-)-methyltransferase"/>
    <property type="match status" value="1"/>
</dbReference>
<dbReference type="Gene3D" id="3.40.1280.10">
    <property type="match status" value="1"/>
</dbReference>
<dbReference type="Gene3D" id="1.10.1270.20">
    <property type="entry name" value="tRNA(m1g37)methyltransferase, domain 2"/>
    <property type="match status" value="1"/>
</dbReference>
<dbReference type="HAMAP" id="MF_00605">
    <property type="entry name" value="TrmD"/>
    <property type="match status" value="1"/>
</dbReference>
<dbReference type="InterPro" id="IPR029028">
    <property type="entry name" value="Alpha/beta_knot_MTases"/>
</dbReference>
<dbReference type="InterPro" id="IPR023148">
    <property type="entry name" value="tRNA_m1G_MeTrfase_C_sf"/>
</dbReference>
<dbReference type="InterPro" id="IPR002649">
    <property type="entry name" value="tRNA_m1G_MeTrfase_TrmD"/>
</dbReference>
<dbReference type="InterPro" id="IPR029026">
    <property type="entry name" value="tRNA_m1G_MTases_N"/>
</dbReference>
<dbReference type="InterPro" id="IPR016009">
    <property type="entry name" value="tRNA_MeTrfase_TRMD/TRM10"/>
</dbReference>
<dbReference type="NCBIfam" id="NF000648">
    <property type="entry name" value="PRK00026.1"/>
    <property type="match status" value="1"/>
</dbReference>
<dbReference type="NCBIfam" id="TIGR00088">
    <property type="entry name" value="trmD"/>
    <property type="match status" value="1"/>
</dbReference>
<dbReference type="PANTHER" id="PTHR46417">
    <property type="entry name" value="TRNA (GUANINE-N(1)-)-METHYLTRANSFERASE"/>
    <property type="match status" value="1"/>
</dbReference>
<dbReference type="PANTHER" id="PTHR46417:SF1">
    <property type="entry name" value="TRNA (GUANINE-N(1)-)-METHYLTRANSFERASE"/>
    <property type="match status" value="1"/>
</dbReference>
<dbReference type="Pfam" id="PF01746">
    <property type="entry name" value="tRNA_m1G_MT"/>
    <property type="match status" value="1"/>
</dbReference>
<dbReference type="PIRSF" id="PIRSF000386">
    <property type="entry name" value="tRNA_mtase"/>
    <property type="match status" value="1"/>
</dbReference>
<dbReference type="SUPFAM" id="SSF75217">
    <property type="entry name" value="alpha/beta knot"/>
    <property type="match status" value="1"/>
</dbReference>
<reference key="1">
    <citation type="journal article" date="2008" name="BMC Genomics">
        <title>The genome of Aeromonas salmonicida subsp. salmonicida A449: insights into the evolution of a fish pathogen.</title>
        <authorList>
            <person name="Reith M.E."/>
            <person name="Singh R.K."/>
            <person name="Curtis B."/>
            <person name="Boyd J.M."/>
            <person name="Bouevitch A."/>
            <person name="Kimball J."/>
            <person name="Munholland J."/>
            <person name="Murphy C."/>
            <person name="Sarty D."/>
            <person name="Williams J."/>
            <person name="Nash J.H."/>
            <person name="Johnson S.C."/>
            <person name="Brown L.L."/>
        </authorList>
    </citation>
    <scope>NUCLEOTIDE SEQUENCE [LARGE SCALE GENOMIC DNA]</scope>
    <source>
        <strain>A449</strain>
    </source>
</reference>
<keyword id="KW-0963">Cytoplasm</keyword>
<keyword id="KW-0489">Methyltransferase</keyword>
<keyword id="KW-0949">S-adenosyl-L-methionine</keyword>
<keyword id="KW-0808">Transferase</keyword>
<keyword id="KW-0819">tRNA processing</keyword>
<feature type="chain" id="PRO_1000006445" description="tRNA (guanine-N(1)-)-methyltransferase">
    <location>
        <begin position="1"/>
        <end position="249"/>
    </location>
</feature>
<feature type="binding site" evidence="1">
    <location>
        <position position="113"/>
    </location>
    <ligand>
        <name>S-adenosyl-L-methionine</name>
        <dbReference type="ChEBI" id="CHEBI:59789"/>
    </ligand>
</feature>
<feature type="binding site" evidence="1">
    <location>
        <begin position="133"/>
        <end position="138"/>
    </location>
    <ligand>
        <name>S-adenosyl-L-methionine</name>
        <dbReference type="ChEBI" id="CHEBI:59789"/>
    </ligand>
</feature>
<gene>
    <name evidence="1" type="primary">trmD</name>
    <name type="ordered locus">ASA_0668</name>
</gene>
<comment type="function">
    <text evidence="1">Specifically methylates guanosine-37 in various tRNAs.</text>
</comment>
<comment type="catalytic activity">
    <reaction evidence="1">
        <text>guanosine(37) in tRNA + S-adenosyl-L-methionine = N(1)-methylguanosine(37) in tRNA + S-adenosyl-L-homocysteine + H(+)</text>
        <dbReference type="Rhea" id="RHEA:36899"/>
        <dbReference type="Rhea" id="RHEA-COMP:10145"/>
        <dbReference type="Rhea" id="RHEA-COMP:10147"/>
        <dbReference type="ChEBI" id="CHEBI:15378"/>
        <dbReference type="ChEBI" id="CHEBI:57856"/>
        <dbReference type="ChEBI" id="CHEBI:59789"/>
        <dbReference type="ChEBI" id="CHEBI:73542"/>
        <dbReference type="ChEBI" id="CHEBI:74269"/>
        <dbReference type="EC" id="2.1.1.228"/>
    </reaction>
</comment>
<comment type="subunit">
    <text evidence="1">Homodimer.</text>
</comment>
<comment type="subcellular location">
    <subcellularLocation>
        <location evidence="1">Cytoplasm</location>
    </subcellularLocation>
</comment>
<comment type="similarity">
    <text evidence="1">Belongs to the RNA methyltransferase TrmD family.</text>
</comment>
<name>TRMD_AERS4</name>